<accession>A6VRW7</accession>
<reference key="1">
    <citation type="submission" date="2007-06" db="EMBL/GenBank/DDBJ databases">
        <title>Complete sequence of Marinomonas sp. MWYL1.</title>
        <authorList>
            <consortium name="US DOE Joint Genome Institute"/>
            <person name="Copeland A."/>
            <person name="Lucas S."/>
            <person name="Lapidus A."/>
            <person name="Barry K."/>
            <person name="Glavina del Rio T."/>
            <person name="Dalin E."/>
            <person name="Tice H."/>
            <person name="Pitluck S."/>
            <person name="Kiss H."/>
            <person name="Brettin T."/>
            <person name="Bruce D."/>
            <person name="Detter J.C."/>
            <person name="Han C."/>
            <person name="Schmutz J."/>
            <person name="Larimer F."/>
            <person name="Land M."/>
            <person name="Hauser L."/>
            <person name="Kyrpides N."/>
            <person name="Kim E."/>
            <person name="Johnston A.W.B."/>
            <person name="Todd J.D."/>
            <person name="Rogers R."/>
            <person name="Wexler M."/>
            <person name="Bond P.L."/>
            <person name="Li Y."/>
            <person name="Richardson P."/>
        </authorList>
    </citation>
    <scope>NUCLEOTIDE SEQUENCE [LARGE SCALE GENOMIC DNA]</scope>
    <source>
        <strain>MWYL1</strain>
    </source>
</reference>
<sequence>MAKRKQGIFGRIWFVAWRFLLLFVIVLFLFRFVPLPTTSFMLQSQYPVKHTWISIDKLPTYMPLAVVASEDQRFPDHFGVDFTAISKALDQYDDGDGLRGASTITQQTAKNLFLWSGRSFIRKGLEAGLAIGLETLWGKKRILEVYLNIAEFGKGIYGVEAASQHYFGRSASKLTMNQAARLAVLLPSPRTRNPNDLTFYLRERVDWVERQMQQLGPDYLKPIIE</sequence>
<comment type="function">
    <text evidence="1">Peptidoglycan polymerase that catalyzes glycan chain elongation from lipid-linked precursors.</text>
</comment>
<comment type="catalytic activity">
    <reaction evidence="1">
        <text>[GlcNAc-(1-&gt;4)-Mur2Ac(oyl-L-Ala-gamma-D-Glu-L-Lys-D-Ala-D-Ala)](n)-di-trans,octa-cis-undecaprenyl diphosphate + beta-D-GlcNAc-(1-&gt;4)-Mur2Ac(oyl-L-Ala-gamma-D-Glu-L-Lys-D-Ala-D-Ala)-di-trans,octa-cis-undecaprenyl diphosphate = [GlcNAc-(1-&gt;4)-Mur2Ac(oyl-L-Ala-gamma-D-Glu-L-Lys-D-Ala-D-Ala)](n+1)-di-trans,octa-cis-undecaprenyl diphosphate + di-trans,octa-cis-undecaprenyl diphosphate + H(+)</text>
        <dbReference type="Rhea" id="RHEA:23708"/>
        <dbReference type="Rhea" id="RHEA-COMP:9602"/>
        <dbReference type="Rhea" id="RHEA-COMP:9603"/>
        <dbReference type="ChEBI" id="CHEBI:15378"/>
        <dbReference type="ChEBI" id="CHEBI:58405"/>
        <dbReference type="ChEBI" id="CHEBI:60033"/>
        <dbReference type="ChEBI" id="CHEBI:78435"/>
        <dbReference type="EC" id="2.4.99.28"/>
    </reaction>
</comment>
<comment type="pathway">
    <text evidence="1">Cell wall biogenesis; peptidoglycan biosynthesis.</text>
</comment>
<comment type="subcellular location">
    <subcellularLocation>
        <location evidence="1">Cell inner membrane</location>
        <topology evidence="1">Single-pass membrane protein</topology>
    </subcellularLocation>
</comment>
<comment type="similarity">
    <text evidence="1">Belongs to the glycosyltransferase 51 family.</text>
</comment>
<proteinExistence type="inferred from homology"/>
<protein>
    <recommendedName>
        <fullName evidence="1">Biosynthetic peptidoglycan transglycosylase</fullName>
        <ecNumber evidence="1">2.4.99.28</ecNumber>
    </recommendedName>
    <alternativeName>
        <fullName evidence="1">Glycan polymerase</fullName>
    </alternativeName>
    <alternativeName>
        <fullName evidence="1">Peptidoglycan glycosyltransferase MtgA</fullName>
        <shortName evidence="1">PGT</shortName>
    </alternativeName>
</protein>
<keyword id="KW-0997">Cell inner membrane</keyword>
<keyword id="KW-1003">Cell membrane</keyword>
<keyword id="KW-0133">Cell shape</keyword>
<keyword id="KW-0961">Cell wall biogenesis/degradation</keyword>
<keyword id="KW-0328">Glycosyltransferase</keyword>
<keyword id="KW-0472">Membrane</keyword>
<keyword id="KW-0573">Peptidoglycan synthesis</keyword>
<keyword id="KW-0808">Transferase</keyword>
<keyword id="KW-0812">Transmembrane</keyword>
<keyword id="KW-1133">Transmembrane helix</keyword>
<name>MTGA_MARMS</name>
<gene>
    <name evidence="1" type="primary">mtgA</name>
    <name type="ordered locus">Mmwyl1_0254</name>
</gene>
<evidence type="ECO:0000255" key="1">
    <source>
        <dbReference type="HAMAP-Rule" id="MF_00766"/>
    </source>
</evidence>
<dbReference type="EC" id="2.4.99.28" evidence="1"/>
<dbReference type="EMBL" id="CP000749">
    <property type="protein sequence ID" value="ABR69196.1"/>
    <property type="molecule type" value="Genomic_DNA"/>
</dbReference>
<dbReference type="SMR" id="A6VRW7"/>
<dbReference type="STRING" id="400668.Mmwyl1_0254"/>
<dbReference type="CAZy" id="GT51">
    <property type="family name" value="Glycosyltransferase Family 51"/>
</dbReference>
<dbReference type="KEGG" id="mmw:Mmwyl1_0254"/>
<dbReference type="eggNOG" id="COG0744">
    <property type="taxonomic scope" value="Bacteria"/>
</dbReference>
<dbReference type="HOGENOM" id="CLU_006354_1_1_6"/>
<dbReference type="OrthoDB" id="9766909at2"/>
<dbReference type="UniPathway" id="UPA00219"/>
<dbReference type="GO" id="GO:0009274">
    <property type="term" value="C:peptidoglycan-based cell wall"/>
    <property type="evidence" value="ECO:0007669"/>
    <property type="project" value="InterPro"/>
</dbReference>
<dbReference type="GO" id="GO:0005886">
    <property type="term" value="C:plasma membrane"/>
    <property type="evidence" value="ECO:0007669"/>
    <property type="project" value="UniProtKB-SubCell"/>
</dbReference>
<dbReference type="GO" id="GO:0016763">
    <property type="term" value="F:pentosyltransferase activity"/>
    <property type="evidence" value="ECO:0007669"/>
    <property type="project" value="InterPro"/>
</dbReference>
<dbReference type="GO" id="GO:0008955">
    <property type="term" value="F:peptidoglycan glycosyltransferase activity"/>
    <property type="evidence" value="ECO:0007669"/>
    <property type="project" value="UniProtKB-UniRule"/>
</dbReference>
<dbReference type="GO" id="GO:0071555">
    <property type="term" value="P:cell wall organization"/>
    <property type="evidence" value="ECO:0007669"/>
    <property type="project" value="UniProtKB-KW"/>
</dbReference>
<dbReference type="GO" id="GO:0009252">
    <property type="term" value="P:peptidoglycan biosynthetic process"/>
    <property type="evidence" value="ECO:0007669"/>
    <property type="project" value="UniProtKB-UniRule"/>
</dbReference>
<dbReference type="GO" id="GO:0008360">
    <property type="term" value="P:regulation of cell shape"/>
    <property type="evidence" value="ECO:0007669"/>
    <property type="project" value="UniProtKB-KW"/>
</dbReference>
<dbReference type="Gene3D" id="1.10.3810.10">
    <property type="entry name" value="Biosynthetic peptidoglycan transglycosylase-like"/>
    <property type="match status" value="1"/>
</dbReference>
<dbReference type="HAMAP" id="MF_00766">
    <property type="entry name" value="PGT_MtgA"/>
    <property type="match status" value="1"/>
</dbReference>
<dbReference type="InterPro" id="IPR001264">
    <property type="entry name" value="Glyco_trans_51"/>
</dbReference>
<dbReference type="InterPro" id="IPR023346">
    <property type="entry name" value="Lysozyme-like_dom_sf"/>
</dbReference>
<dbReference type="InterPro" id="IPR036950">
    <property type="entry name" value="PBP_transglycosylase"/>
</dbReference>
<dbReference type="InterPro" id="IPR011812">
    <property type="entry name" value="Pep_trsgly"/>
</dbReference>
<dbReference type="NCBIfam" id="TIGR02070">
    <property type="entry name" value="mono_pep_trsgly"/>
    <property type="match status" value="1"/>
</dbReference>
<dbReference type="PANTHER" id="PTHR30400:SF0">
    <property type="entry name" value="BIOSYNTHETIC PEPTIDOGLYCAN TRANSGLYCOSYLASE"/>
    <property type="match status" value="1"/>
</dbReference>
<dbReference type="PANTHER" id="PTHR30400">
    <property type="entry name" value="MONOFUNCTIONAL BIOSYNTHETIC PEPTIDOGLYCAN TRANSGLYCOSYLASE"/>
    <property type="match status" value="1"/>
</dbReference>
<dbReference type="Pfam" id="PF00912">
    <property type="entry name" value="Transgly"/>
    <property type="match status" value="1"/>
</dbReference>
<dbReference type="SUPFAM" id="SSF53955">
    <property type="entry name" value="Lysozyme-like"/>
    <property type="match status" value="1"/>
</dbReference>
<organism>
    <name type="scientific">Marinomonas sp. (strain MWYL1)</name>
    <dbReference type="NCBI Taxonomy" id="400668"/>
    <lineage>
        <taxon>Bacteria</taxon>
        <taxon>Pseudomonadati</taxon>
        <taxon>Pseudomonadota</taxon>
        <taxon>Gammaproteobacteria</taxon>
        <taxon>Oceanospirillales</taxon>
        <taxon>Oceanospirillaceae</taxon>
        <taxon>Marinomonas</taxon>
    </lineage>
</organism>
<feature type="chain" id="PRO_1000083539" description="Biosynthetic peptidoglycan transglycosylase">
    <location>
        <begin position="1"/>
        <end position="225"/>
    </location>
</feature>
<feature type="transmembrane region" description="Helical" evidence="1">
    <location>
        <begin position="12"/>
        <end position="32"/>
    </location>
</feature>